<gene>
    <name evidence="1" type="primary">rpsD</name>
    <name type="ordered locus">Anae109_1937</name>
</gene>
<organism>
    <name type="scientific">Anaeromyxobacter sp. (strain Fw109-5)</name>
    <dbReference type="NCBI Taxonomy" id="404589"/>
    <lineage>
        <taxon>Bacteria</taxon>
        <taxon>Pseudomonadati</taxon>
        <taxon>Myxococcota</taxon>
        <taxon>Myxococcia</taxon>
        <taxon>Myxococcales</taxon>
        <taxon>Cystobacterineae</taxon>
        <taxon>Anaeromyxobacteraceae</taxon>
        <taxon>Anaeromyxobacter</taxon>
    </lineage>
</organism>
<evidence type="ECO:0000255" key="1">
    <source>
        <dbReference type="HAMAP-Rule" id="MF_01306"/>
    </source>
</evidence>
<evidence type="ECO:0000305" key="2"/>
<dbReference type="EMBL" id="CP000769">
    <property type="protein sequence ID" value="ABS26140.1"/>
    <property type="molecule type" value="Genomic_DNA"/>
</dbReference>
<dbReference type="RefSeq" id="WP_012096718.1">
    <property type="nucleotide sequence ID" value="NC_009675.1"/>
</dbReference>
<dbReference type="SMR" id="A7HBP4"/>
<dbReference type="STRING" id="404589.Anae109_1937"/>
<dbReference type="KEGG" id="afw:Anae109_1937"/>
<dbReference type="eggNOG" id="COG0522">
    <property type="taxonomic scope" value="Bacteria"/>
</dbReference>
<dbReference type="HOGENOM" id="CLU_092403_0_2_7"/>
<dbReference type="OrthoDB" id="9803672at2"/>
<dbReference type="Proteomes" id="UP000006382">
    <property type="component" value="Chromosome"/>
</dbReference>
<dbReference type="GO" id="GO:0015935">
    <property type="term" value="C:small ribosomal subunit"/>
    <property type="evidence" value="ECO:0007669"/>
    <property type="project" value="InterPro"/>
</dbReference>
<dbReference type="GO" id="GO:0019843">
    <property type="term" value="F:rRNA binding"/>
    <property type="evidence" value="ECO:0007669"/>
    <property type="project" value="UniProtKB-UniRule"/>
</dbReference>
<dbReference type="GO" id="GO:0003735">
    <property type="term" value="F:structural constituent of ribosome"/>
    <property type="evidence" value="ECO:0007669"/>
    <property type="project" value="InterPro"/>
</dbReference>
<dbReference type="GO" id="GO:0042274">
    <property type="term" value="P:ribosomal small subunit biogenesis"/>
    <property type="evidence" value="ECO:0007669"/>
    <property type="project" value="TreeGrafter"/>
</dbReference>
<dbReference type="GO" id="GO:0006412">
    <property type="term" value="P:translation"/>
    <property type="evidence" value="ECO:0007669"/>
    <property type="project" value="UniProtKB-UniRule"/>
</dbReference>
<dbReference type="CDD" id="cd00165">
    <property type="entry name" value="S4"/>
    <property type="match status" value="1"/>
</dbReference>
<dbReference type="FunFam" id="1.10.1050.10:FF:000001">
    <property type="entry name" value="30S ribosomal protein S4"/>
    <property type="match status" value="1"/>
</dbReference>
<dbReference type="FunFam" id="3.10.290.10:FF:000001">
    <property type="entry name" value="30S ribosomal protein S4"/>
    <property type="match status" value="1"/>
</dbReference>
<dbReference type="Gene3D" id="1.10.1050.10">
    <property type="entry name" value="Ribosomal Protein S4 Delta 41, Chain A, domain 1"/>
    <property type="match status" value="1"/>
</dbReference>
<dbReference type="Gene3D" id="3.10.290.10">
    <property type="entry name" value="RNA-binding S4 domain"/>
    <property type="match status" value="1"/>
</dbReference>
<dbReference type="HAMAP" id="MF_01306_B">
    <property type="entry name" value="Ribosomal_uS4_B"/>
    <property type="match status" value="1"/>
</dbReference>
<dbReference type="InterPro" id="IPR022801">
    <property type="entry name" value="Ribosomal_uS4"/>
</dbReference>
<dbReference type="InterPro" id="IPR005709">
    <property type="entry name" value="Ribosomal_uS4_bac-type"/>
</dbReference>
<dbReference type="InterPro" id="IPR018079">
    <property type="entry name" value="Ribosomal_uS4_CS"/>
</dbReference>
<dbReference type="InterPro" id="IPR001912">
    <property type="entry name" value="Ribosomal_uS4_N"/>
</dbReference>
<dbReference type="InterPro" id="IPR002942">
    <property type="entry name" value="S4_RNA-bd"/>
</dbReference>
<dbReference type="InterPro" id="IPR036986">
    <property type="entry name" value="S4_RNA-bd_sf"/>
</dbReference>
<dbReference type="NCBIfam" id="NF003717">
    <property type="entry name" value="PRK05327.1"/>
    <property type="match status" value="1"/>
</dbReference>
<dbReference type="NCBIfam" id="TIGR01017">
    <property type="entry name" value="rpsD_bact"/>
    <property type="match status" value="1"/>
</dbReference>
<dbReference type="PANTHER" id="PTHR11831">
    <property type="entry name" value="30S 40S RIBOSOMAL PROTEIN"/>
    <property type="match status" value="1"/>
</dbReference>
<dbReference type="PANTHER" id="PTHR11831:SF4">
    <property type="entry name" value="SMALL RIBOSOMAL SUBUNIT PROTEIN US4M"/>
    <property type="match status" value="1"/>
</dbReference>
<dbReference type="Pfam" id="PF00163">
    <property type="entry name" value="Ribosomal_S4"/>
    <property type="match status" value="1"/>
</dbReference>
<dbReference type="Pfam" id="PF01479">
    <property type="entry name" value="S4"/>
    <property type="match status" value="1"/>
</dbReference>
<dbReference type="SMART" id="SM01390">
    <property type="entry name" value="Ribosomal_S4"/>
    <property type="match status" value="1"/>
</dbReference>
<dbReference type="SMART" id="SM00363">
    <property type="entry name" value="S4"/>
    <property type="match status" value="1"/>
</dbReference>
<dbReference type="SUPFAM" id="SSF55174">
    <property type="entry name" value="Alpha-L RNA-binding motif"/>
    <property type="match status" value="1"/>
</dbReference>
<dbReference type="PROSITE" id="PS00632">
    <property type="entry name" value="RIBOSOMAL_S4"/>
    <property type="match status" value="1"/>
</dbReference>
<dbReference type="PROSITE" id="PS50889">
    <property type="entry name" value="S4"/>
    <property type="match status" value="1"/>
</dbReference>
<protein>
    <recommendedName>
        <fullName evidence="1">Small ribosomal subunit protein uS4</fullName>
    </recommendedName>
    <alternativeName>
        <fullName evidence="2">30S ribosomal protein S4</fullName>
    </alternativeName>
</protein>
<sequence length="208" mass="24029">MARYNESVCRLCRRENLKMYLKGDRCYTDKCAIERRPYPPGQHGQGRVKFSEYGVQLREKQKVKRMYGLLEAGFRHAYQNAAAAKGKTGENLLQTLELRLDNVVFRLGFADTRNEARQLVRHGHFKVNGRKVNIPSYLCRAGDKVELRDRSRKVVRISEALEAVDRRGVPGWLELDKGGFKGTVRTQPSREDITMPIQEQLIVELYSK</sequence>
<feature type="chain" id="PRO_5000267155" description="Small ribosomal subunit protein uS4">
    <location>
        <begin position="1"/>
        <end position="208"/>
    </location>
</feature>
<feature type="domain" description="S4 RNA-binding" evidence="1">
    <location>
        <begin position="98"/>
        <end position="161"/>
    </location>
</feature>
<name>RS4_ANADF</name>
<accession>A7HBP4</accession>
<reference key="1">
    <citation type="journal article" date="2015" name="Genome Announc.">
        <title>Complete genome sequence of Anaeromyxobacter sp. Fw109-5, an anaerobic, metal-reducing bacterium isolated from a contaminated subsurface environment.</title>
        <authorList>
            <person name="Hwang C."/>
            <person name="Copeland A."/>
            <person name="Lucas S."/>
            <person name="Lapidus A."/>
            <person name="Barry K."/>
            <person name="Glavina Del Rio T."/>
            <person name="Dalin E."/>
            <person name="Tice H."/>
            <person name="Pitluck S."/>
            <person name="Sims D."/>
            <person name="Brettin T."/>
            <person name="Bruce D.C."/>
            <person name="Detter J.C."/>
            <person name="Han C.S."/>
            <person name="Schmutz J."/>
            <person name="Larimer F.W."/>
            <person name="Land M.L."/>
            <person name="Hauser L.J."/>
            <person name="Kyrpides N."/>
            <person name="Lykidis A."/>
            <person name="Richardson P."/>
            <person name="Belieav A."/>
            <person name="Sanford R.A."/>
            <person name="Loeffler F.E."/>
            <person name="Fields M.W."/>
        </authorList>
    </citation>
    <scope>NUCLEOTIDE SEQUENCE [LARGE SCALE GENOMIC DNA]</scope>
    <source>
        <strain>Fw109-5</strain>
    </source>
</reference>
<keyword id="KW-1185">Reference proteome</keyword>
<keyword id="KW-0687">Ribonucleoprotein</keyword>
<keyword id="KW-0689">Ribosomal protein</keyword>
<keyword id="KW-0694">RNA-binding</keyword>
<keyword id="KW-0699">rRNA-binding</keyword>
<proteinExistence type="inferred from homology"/>
<comment type="function">
    <text evidence="1">One of the primary rRNA binding proteins, it binds directly to 16S rRNA where it nucleates assembly of the body of the 30S subunit.</text>
</comment>
<comment type="function">
    <text evidence="1">With S5 and S12 plays an important role in translational accuracy.</text>
</comment>
<comment type="subunit">
    <text evidence="1">Part of the 30S ribosomal subunit. Contacts protein S5. The interaction surface between S4 and S5 is involved in control of translational fidelity.</text>
</comment>
<comment type="similarity">
    <text evidence="1">Belongs to the universal ribosomal protein uS4 family.</text>
</comment>